<accession>P14092</accession>
<gene>
    <name evidence="1" type="primary">MT-ATP6</name>
    <name type="synonym">ATP6</name>
    <name type="synonym">ATPASE6</name>
    <name type="synonym">MTATP6</name>
</gene>
<dbReference type="EMBL" id="X15841">
    <property type="protein sequence ID" value="CAA33842.1"/>
    <property type="molecule type" value="Genomic_DNA"/>
</dbReference>
<dbReference type="EMBL" id="X52392">
    <property type="protein sequence ID" value="CAA36630.1"/>
    <property type="molecule type" value="Genomic_DNA"/>
</dbReference>
<dbReference type="PIR" id="S10192">
    <property type="entry name" value="S10192"/>
</dbReference>
<dbReference type="RefSeq" id="NP_006920.1">
    <property type="nucleotide sequence ID" value="NC_001323.1"/>
</dbReference>
<dbReference type="SMR" id="P14092"/>
<dbReference type="FunCoup" id="P14092">
    <property type="interactions" value="13"/>
</dbReference>
<dbReference type="STRING" id="9031.ENSGALP00000057531"/>
<dbReference type="PaxDb" id="9031-ENSGALP00000034617"/>
<dbReference type="Ensembl" id="ENSGALT00010000023.1">
    <property type="protein sequence ID" value="ENSGALP00010000007.1"/>
    <property type="gene ID" value="ENSGALG00010000023.1"/>
</dbReference>
<dbReference type="VEuPathDB" id="HostDB:geneid_63549466"/>
<dbReference type="eggNOG" id="KOG4665">
    <property type="taxonomic scope" value="Eukaryota"/>
</dbReference>
<dbReference type="GeneTree" id="ENSGT00390000005568"/>
<dbReference type="HOGENOM" id="CLU_041018_0_2_1"/>
<dbReference type="InParanoid" id="P14092"/>
<dbReference type="OMA" id="FFDQFMS"/>
<dbReference type="OrthoDB" id="5976622at2759"/>
<dbReference type="PhylomeDB" id="P14092"/>
<dbReference type="TreeFam" id="TF343395"/>
<dbReference type="Reactome" id="R-GGA-163210">
    <property type="pathway name" value="Formation of ATP by chemiosmotic coupling"/>
</dbReference>
<dbReference type="Reactome" id="R-GGA-8949613">
    <property type="pathway name" value="Cristae formation"/>
</dbReference>
<dbReference type="Reactome" id="R-GGA-9837999">
    <property type="pathway name" value="Mitochondrial protein degradation"/>
</dbReference>
<dbReference type="PRO" id="PR:P14092"/>
<dbReference type="Proteomes" id="UP000000539">
    <property type="component" value="Mitochondrion MT"/>
</dbReference>
<dbReference type="Bgee" id="ENSGALG00000041091">
    <property type="expression patterns" value="Expressed in cerebellum and 13 other cell types or tissues"/>
</dbReference>
<dbReference type="GO" id="GO:0005743">
    <property type="term" value="C:mitochondrial inner membrane"/>
    <property type="evidence" value="ECO:0007669"/>
    <property type="project" value="UniProtKB-SubCell"/>
</dbReference>
<dbReference type="GO" id="GO:0045259">
    <property type="term" value="C:proton-transporting ATP synthase complex"/>
    <property type="evidence" value="ECO:0000250"/>
    <property type="project" value="UniProtKB"/>
</dbReference>
<dbReference type="GO" id="GO:0015252">
    <property type="term" value="F:proton channel activity"/>
    <property type="evidence" value="ECO:0000250"/>
    <property type="project" value="UniProtKB"/>
</dbReference>
<dbReference type="GO" id="GO:0046933">
    <property type="term" value="F:proton-transporting ATP synthase activity, rotational mechanism"/>
    <property type="evidence" value="ECO:0007669"/>
    <property type="project" value="Ensembl"/>
</dbReference>
<dbReference type="GO" id="GO:0015986">
    <property type="term" value="P:proton motive force-driven ATP synthesis"/>
    <property type="evidence" value="ECO:0000250"/>
    <property type="project" value="UniProtKB"/>
</dbReference>
<dbReference type="GO" id="GO:0042776">
    <property type="term" value="P:proton motive force-driven mitochondrial ATP synthesis"/>
    <property type="evidence" value="ECO:0007669"/>
    <property type="project" value="Ensembl"/>
</dbReference>
<dbReference type="GO" id="GO:1902600">
    <property type="term" value="P:proton transmembrane transport"/>
    <property type="evidence" value="ECO:0000250"/>
    <property type="project" value="UniProtKB"/>
</dbReference>
<dbReference type="CDD" id="cd00310">
    <property type="entry name" value="ATP-synt_Fo_a_6"/>
    <property type="match status" value="1"/>
</dbReference>
<dbReference type="FunFam" id="1.20.120.220:FF:000004">
    <property type="entry name" value="ATP synthase subunit a"/>
    <property type="match status" value="1"/>
</dbReference>
<dbReference type="Gene3D" id="1.20.120.220">
    <property type="entry name" value="ATP synthase, F0 complex, subunit A"/>
    <property type="match status" value="1"/>
</dbReference>
<dbReference type="InterPro" id="IPR000568">
    <property type="entry name" value="ATP_synth_F0_asu"/>
</dbReference>
<dbReference type="InterPro" id="IPR023011">
    <property type="entry name" value="ATP_synth_F0_asu_AS"/>
</dbReference>
<dbReference type="InterPro" id="IPR045083">
    <property type="entry name" value="ATP_synth_F0_asu_bact/mt"/>
</dbReference>
<dbReference type="InterPro" id="IPR035908">
    <property type="entry name" value="F0_ATP_A_sf"/>
</dbReference>
<dbReference type="NCBIfam" id="TIGR01131">
    <property type="entry name" value="ATP_synt_6_or_A"/>
    <property type="match status" value="1"/>
</dbReference>
<dbReference type="PANTHER" id="PTHR11410">
    <property type="entry name" value="ATP SYNTHASE SUBUNIT A"/>
    <property type="match status" value="1"/>
</dbReference>
<dbReference type="PANTHER" id="PTHR11410:SF0">
    <property type="entry name" value="ATP SYNTHASE SUBUNIT A"/>
    <property type="match status" value="1"/>
</dbReference>
<dbReference type="Pfam" id="PF00119">
    <property type="entry name" value="ATP-synt_A"/>
    <property type="match status" value="1"/>
</dbReference>
<dbReference type="PRINTS" id="PR00123">
    <property type="entry name" value="ATPASEA"/>
</dbReference>
<dbReference type="SUPFAM" id="SSF81336">
    <property type="entry name" value="F1F0 ATP synthase subunit A"/>
    <property type="match status" value="1"/>
</dbReference>
<dbReference type="PROSITE" id="PS00449">
    <property type="entry name" value="ATPASE_A"/>
    <property type="match status" value="1"/>
</dbReference>
<organism>
    <name type="scientific">Gallus gallus</name>
    <name type="common">Chicken</name>
    <dbReference type="NCBI Taxonomy" id="9031"/>
    <lineage>
        <taxon>Eukaryota</taxon>
        <taxon>Metazoa</taxon>
        <taxon>Chordata</taxon>
        <taxon>Craniata</taxon>
        <taxon>Vertebrata</taxon>
        <taxon>Euteleostomi</taxon>
        <taxon>Archelosauria</taxon>
        <taxon>Archosauria</taxon>
        <taxon>Dinosauria</taxon>
        <taxon>Saurischia</taxon>
        <taxon>Theropoda</taxon>
        <taxon>Coelurosauria</taxon>
        <taxon>Aves</taxon>
        <taxon>Neognathae</taxon>
        <taxon>Galloanserae</taxon>
        <taxon>Galliformes</taxon>
        <taxon>Phasianidae</taxon>
        <taxon>Phasianinae</taxon>
        <taxon>Gallus</taxon>
    </lineage>
</organism>
<sequence>MNLSFFDQFSSPCLLGIPLILPSLLLPALLLPSPGNRWINNRLSTIQLWFTHLITKQLMTPLNKAGHKWALLLTSLILMLLSINLLGLLPYTFTPTTQLSMNMALALPLWLATLLTGLRNQPSASLGHLLPEGTPTPLIPALIMIETTSLLIRPLALGVRLTANLTAGHLLIQLISTATIALLPMMPSISALTALILFLLTILEVAVAMIQAYVFVLLLSLYLQENI</sequence>
<evidence type="ECO:0000250" key="1">
    <source>
        <dbReference type="UniProtKB" id="P00846"/>
    </source>
</evidence>
<evidence type="ECO:0000255" key="2"/>
<evidence type="ECO:0000305" key="3"/>
<evidence type="ECO:0000312" key="4">
    <source>
        <dbReference type="Proteomes" id="UP000000539"/>
    </source>
</evidence>
<geneLocation type="mitochondrion"/>
<name>ATP6_CHICK</name>
<comment type="function">
    <text evidence="1">Subunit a, of the mitochondrial membrane ATP synthase complex (F(1)F(0) ATP synthase or Complex V) that produces ATP from ADP in the presence of a proton gradient across the membrane which is generated by electron transport complexes of the respiratory chain. ATP synthase complex consist of a soluble F(1) head domain - the catalytic core - and a membrane F(1) domain - the membrane proton channel. These two domains are linked by a central stalk rotating inside the F(1) region and a stationary peripheral stalk. During catalysis, ATP synthesis in the catalytic domain of F(1) is coupled via a rotary mechanism of the central stalk subunits to proton translocation. With the subunit c (ATP5MC1), forms the proton-conducting channel in the F(0) domain, that contains two crucial half-channels (inlet and outlet) that facilitate proton movement from the mitochondrial intermembrane space (IMS) into the matrix. Protons are taken up via the inlet half-channel and released through the outlet half-channel, following a Grotthuss mechanism.</text>
</comment>
<comment type="catalytic activity">
    <reaction evidence="1">
        <text>H(+)(in) = H(+)(out)</text>
        <dbReference type="Rhea" id="RHEA:34979"/>
        <dbReference type="ChEBI" id="CHEBI:15378"/>
    </reaction>
</comment>
<comment type="subunit">
    <text evidence="1">Component of the ATP synthase complex composed at least of ATP5F1A/subunit alpha, ATP5F1B/subunit beta, ATP5MC1/subunit c (homooctomer), MT-ATP6/subunit a, MT-ATP8/subunit 8, ATP5ME/subunit e, ATP5MF/subunit f, ATP5MG/subunit g, ATP5MK/subunit k, ATP5MJ/subunit j, ATP5F1C/subunit gamma, ATP5F1D/subunit delta, ATP5F1E/subunit epsilon, ATP5PF/subunit F6, ATP5PB/subunit b, ATP5PD/subunit d, ATP5PO/subunit OSCP. ATP synthase complex consists of a soluble F(1) head domain (subunits alpha(3) and beta(3)) - the catalytic core - and a membrane F(0) domain - the membrane proton channel (subunits c, a, 8, e, f, g, k and j). These two domains are linked by a central stalk (subunits gamma, delta, and epsilon) rotating inside the F1 region and a stationary peripheral stalk (subunits F6, b, d, and OSCP). Interacts with DNAJC30; interaction is direct.</text>
</comment>
<comment type="subcellular location">
    <subcellularLocation>
        <location>Mitochondrion inner membrane</location>
        <topology>Multi-pass membrane protein</topology>
    </subcellularLocation>
</comment>
<comment type="similarity">
    <text evidence="3">Belongs to the ATPase A chain family.</text>
</comment>
<reference key="1">
    <citation type="journal article" date="1989" name="J. Mol. Biol.">
        <title>Putative chicken 'muscle-specific 7 S RNA' is related to the mitochondrial ATPase 6 gene.</title>
        <authorList>
            <person name="Desjardins P."/>
            <person name="L'Abbe D."/>
            <person name="Lang B.F."/>
            <person name="Morais R."/>
        </authorList>
    </citation>
    <scope>NUCLEOTIDE SEQUENCE [GENOMIC DNA]</scope>
</reference>
<reference key="2">
    <citation type="journal article" date="1990" name="J. Mol. Biol.">
        <title>Sequence and gene organization of the chicken mitochondrial genome. A novel gene order in higher vertebrates.</title>
        <authorList>
            <person name="Desjardins P."/>
            <person name="Morais R."/>
        </authorList>
    </citation>
    <scope>NUCLEOTIDE SEQUENCE [GENOMIC DNA]</scope>
    <source>
        <strain evidence="4">Red jungle fowl</strain>
    </source>
</reference>
<protein>
    <recommendedName>
        <fullName evidence="1">ATP synthase F(0) complex subunit a</fullName>
    </recommendedName>
    <alternativeName>
        <fullName>F-ATPase protein 6</fullName>
    </alternativeName>
    <alternativeName>
        <fullName evidence="1">Proton-conducting channel, ATP synthase F(0) complex subunit a</fullName>
    </alternativeName>
</protein>
<feature type="chain" id="PRO_0000082106" description="ATP synthase F(0) complex subunit a">
    <location>
        <begin position="1"/>
        <end position="227"/>
    </location>
</feature>
<feature type="transmembrane region" description="Helical" evidence="2">
    <location>
        <begin position="12"/>
        <end position="32"/>
    </location>
</feature>
<feature type="transmembrane region" description="Helical" evidence="2">
    <location>
        <begin position="69"/>
        <end position="89"/>
    </location>
</feature>
<feature type="transmembrane region" description="Helical" evidence="2">
    <location>
        <begin position="98"/>
        <end position="118"/>
    </location>
</feature>
<feature type="transmembrane region" description="Helical" evidence="2">
    <location>
        <begin position="139"/>
        <end position="159"/>
    </location>
</feature>
<feature type="transmembrane region" description="Helical" evidence="2">
    <location>
        <begin position="170"/>
        <end position="190"/>
    </location>
</feature>
<feature type="transmembrane region" description="Helical" evidence="2">
    <location>
        <begin position="196"/>
        <end position="216"/>
    </location>
</feature>
<proteinExistence type="inferred from homology"/>
<keyword id="KW-0066">ATP synthesis</keyword>
<keyword id="KW-0138">CF(0)</keyword>
<keyword id="KW-0375">Hydrogen ion transport</keyword>
<keyword id="KW-0406">Ion transport</keyword>
<keyword id="KW-0472">Membrane</keyword>
<keyword id="KW-0496">Mitochondrion</keyword>
<keyword id="KW-0999">Mitochondrion inner membrane</keyword>
<keyword id="KW-1185">Reference proteome</keyword>
<keyword id="KW-0812">Transmembrane</keyword>
<keyword id="KW-1133">Transmembrane helix</keyword>
<keyword id="KW-0813">Transport</keyword>